<evidence type="ECO:0000250" key="1"/>
<evidence type="ECO:0000250" key="2">
    <source>
        <dbReference type="UniProtKB" id="Q8BYW9"/>
    </source>
</evidence>
<evidence type="ECO:0000255" key="3"/>
<evidence type="ECO:0000255" key="4">
    <source>
        <dbReference type="PROSITE-ProRule" id="PRU10138"/>
    </source>
</evidence>
<evidence type="ECO:0000305" key="5"/>
<feature type="signal peptide" evidence="3">
    <location>
        <begin position="1"/>
        <end position="17"/>
    </location>
</feature>
<feature type="chain" id="PRO_0000301973" description="EGF domain-specific O-linked N-acetylglucosamine transferase">
    <location>
        <begin position="18"/>
        <end position="527"/>
    </location>
</feature>
<feature type="short sequence motif" description="Required for optimal activity" evidence="1">
    <location>
        <begin position="295"/>
        <end position="297"/>
    </location>
</feature>
<feature type="short sequence motif" description="Prevents secretion from ER" evidence="4">
    <location>
        <begin position="524"/>
        <end position="527"/>
    </location>
</feature>
<feature type="glycosylation site" description="N-linked (GlcNAc...) asparagine" evidence="3">
    <location>
        <position position="354"/>
    </location>
</feature>
<name>EOGT_PANTR</name>
<proteinExistence type="evidence at transcript level"/>
<comment type="function">
    <text evidence="2">Catalyzes the transfer of a single N-acetylglucosamine from UDP-GlcNAc to a serine or threonine residue in extracellular proteins resulting in their modification with a beta-linked N-acetylglucosamine (O-GlcNAc). Specifically glycosylates the Thr residue located between the fifth and sixth conserved cysteines of folded EGF-like domains.</text>
</comment>
<comment type="catalytic activity">
    <reaction evidence="2">
        <text>L-seryl-[protein] + UDP-N-acetyl-alpha-D-glucosamine = 3-O-(N-acetyl-beta-D-glucosaminyl)-L-seryl-[protein] + UDP + H(+)</text>
        <dbReference type="Rhea" id="RHEA:48904"/>
        <dbReference type="Rhea" id="RHEA-COMP:9863"/>
        <dbReference type="Rhea" id="RHEA-COMP:12251"/>
        <dbReference type="ChEBI" id="CHEBI:15378"/>
        <dbReference type="ChEBI" id="CHEBI:29999"/>
        <dbReference type="ChEBI" id="CHEBI:57705"/>
        <dbReference type="ChEBI" id="CHEBI:58223"/>
        <dbReference type="ChEBI" id="CHEBI:90838"/>
        <dbReference type="EC" id="2.4.1.255"/>
    </reaction>
</comment>
<comment type="catalytic activity">
    <reaction evidence="2">
        <text>L-threonyl-[protein] + UDP-N-acetyl-alpha-D-glucosamine = 3-O-(N-acetyl-beta-D-glucosaminyl)-L-threonyl-[protein] + UDP + H(+)</text>
        <dbReference type="Rhea" id="RHEA:48908"/>
        <dbReference type="Rhea" id="RHEA-COMP:11060"/>
        <dbReference type="Rhea" id="RHEA-COMP:12252"/>
        <dbReference type="ChEBI" id="CHEBI:15378"/>
        <dbReference type="ChEBI" id="CHEBI:30013"/>
        <dbReference type="ChEBI" id="CHEBI:57705"/>
        <dbReference type="ChEBI" id="CHEBI:58223"/>
        <dbReference type="ChEBI" id="CHEBI:90840"/>
        <dbReference type="EC" id="2.4.1.255"/>
    </reaction>
</comment>
<comment type="subcellular location">
    <subcellularLocation>
        <location evidence="4">Endoplasmic reticulum lumen</location>
    </subcellularLocation>
</comment>
<comment type="similarity">
    <text evidence="5">Belongs to the glycosyltransferase 61 family.</text>
</comment>
<dbReference type="EC" id="2.4.1.255" evidence="2"/>
<dbReference type="EMBL" id="AJ868235">
    <property type="protein sequence ID" value="CAI30570.1"/>
    <property type="molecule type" value="mRNA"/>
</dbReference>
<dbReference type="RefSeq" id="NP_001009171.1">
    <property type="nucleotide sequence ID" value="NM_001009171.1"/>
</dbReference>
<dbReference type="RefSeq" id="XP_009444097.1">
    <property type="nucleotide sequence ID" value="XM_009445822.5"/>
</dbReference>
<dbReference type="RefSeq" id="XP_009444098.1">
    <property type="nucleotide sequence ID" value="XM_009445823.5"/>
</dbReference>
<dbReference type="RefSeq" id="XP_009444099.1">
    <property type="nucleotide sequence ID" value="XM_009445824.2"/>
</dbReference>
<dbReference type="RefSeq" id="XP_063661344.1">
    <property type="nucleotide sequence ID" value="XM_063805274.1"/>
</dbReference>
<dbReference type="SMR" id="Q5NDL1"/>
<dbReference type="FunCoup" id="Q5NDL1">
    <property type="interactions" value="802"/>
</dbReference>
<dbReference type="STRING" id="9598.ENSPTRP00000026055"/>
<dbReference type="CAZy" id="GT61">
    <property type="family name" value="Glycosyltransferase Family 61"/>
</dbReference>
<dbReference type="GlyCosmos" id="Q5NDL1">
    <property type="glycosylation" value="1 site, No reported glycans"/>
</dbReference>
<dbReference type="PaxDb" id="9598-ENSPTRP00000026055"/>
<dbReference type="Ensembl" id="ENSPTRT00000028239.6">
    <property type="protein sequence ID" value="ENSPTRP00000026055.5"/>
    <property type="gene ID" value="ENSPTRG00000015092.7"/>
</dbReference>
<dbReference type="GeneID" id="494220"/>
<dbReference type="CTD" id="285203"/>
<dbReference type="VGNC" id="VGNC:9671">
    <property type="gene designation" value="EOGT"/>
</dbReference>
<dbReference type="eggNOG" id="KOG4698">
    <property type="taxonomic scope" value="Eukaryota"/>
</dbReference>
<dbReference type="GeneTree" id="ENSGT00940000156493"/>
<dbReference type="HOGENOM" id="CLU_039300_0_0_1"/>
<dbReference type="InParanoid" id="Q5NDL1"/>
<dbReference type="OMA" id="GHCELNR"/>
<dbReference type="OrthoDB" id="179at9604"/>
<dbReference type="TreeFam" id="TF313716"/>
<dbReference type="Proteomes" id="UP000002277">
    <property type="component" value="Chromosome 3"/>
</dbReference>
<dbReference type="Bgee" id="ENSPTRG00000015092">
    <property type="expression patterns" value="Expressed in colon and 21 other cell types or tissues"/>
</dbReference>
<dbReference type="GO" id="GO:0005788">
    <property type="term" value="C:endoplasmic reticulum lumen"/>
    <property type="evidence" value="ECO:0000318"/>
    <property type="project" value="GO_Central"/>
</dbReference>
<dbReference type="GO" id="GO:0097363">
    <property type="term" value="F:protein O-acetylglucosaminyltransferase activity"/>
    <property type="evidence" value="ECO:0000250"/>
    <property type="project" value="UniProtKB"/>
</dbReference>
<dbReference type="GO" id="GO:0097370">
    <property type="term" value="P:protein O-GlcNAcylation via threonine"/>
    <property type="evidence" value="ECO:0000318"/>
    <property type="project" value="GO_Central"/>
</dbReference>
<dbReference type="GO" id="GO:0006493">
    <property type="term" value="P:protein O-linked glycosylation"/>
    <property type="evidence" value="ECO:0000250"/>
    <property type="project" value="UniProtKB"/>
</dbReference>
<dbReference type="InterPro" id="IPR049625">
    <property type="entry name" value="Glyco_transf_61_cat"/>
</dbReference>
<dbReference type="InterPro" id="IPR007657">
    <property type="entry name" value="Glycosyltransferase_61"/>
</dbReference>
<dbReference type="PANTHER" id="PTHR20961:SF148">
    <property type="entry name" value="EGF DOMAIN-SPECIFIC O-LINKED N-ACETYLGLUCOSAMINE TRANSFERASE"/>
    <property type="match status" value="1"/>
</dbReference>
<dbReference type="PANTHER" id="PTHR20961">
    <property type="entry name" value="GLYCOSYLTRANSFERASE"/>
    <property type="match status" value="1"/>
</dbReference>
<dbReference type="Pfam" id="PF04577">
    <property type="entry name" value="Glyco_transf_61"/>
    <property type="match status" value="1"/>
</dbReference>
<dbReference type="PROSITE" id="PS00014">
    <property type="entry name" value="ER_TARGET"/>
    <property type="match status" value="1"/>
</dbReference>
<accession>Q5NDL1</accession>
<organism>
    <name type="scientific">Pan troglodytes</name>
    <name type="common">Chimpanzee</name>
    <dbReference type="NCBI Taxonomy" id="9598"/>
    <lineage>
        <taxon>Eukaryota</taxon>
        <taxon>Metazoa</taxon>
        <taxon>Chordata</taxon>
        <taxon>Craniata</taxon>
        <taxon>Vertebrata</taxon>
        <taxon>Euteleostomi</taxon>
        <taxon>Mammalia</taxon>
        <taxon>Eutheria</taxon>
        <taxon>Euarchontoglires</taxon>
        <taxon>Primates</taxon>
        <taxon>Haplorrhini</taxon>
        <taxon>Catarrhini</taxon>
        <taxon>Hominidae</taxon>
        <taxon>Pan</taxon>
    </lineage>
</organism>
<sequence length="527" mass="62044">MLMLFVFGVLLHEVSLSGQNEAPPNTHSIPGEPLYNYASIRLPEEHIPFFLHNNRHIATVCRKDSLCPYKKHLEKLKYCWGYEKSCKPEFRFGYPVCSYVDMGWTDTLESAEDIFWKQADFGYARERLEEMHVLCQPKETSDSSLVCSRYLQYCRATNLYLDLRNIKRNHDRFMEDFFQSGEIGGHCKLDIRTLMSEGQRKSPLQSWFAELQSYTQLNFRPIEDAKCDIVIEKPTYFMKLDAGVNMYHHFCDFINLYITQHVNNSFSTDVYIVMWDTSSYGYGDLFSDTWNAFTDYDVIHLKTYDSKRVCFKEAVFSLLPRMRYGLFYNTPLISGCQNTGLFRAFAQHVLHRLNITQEGPKDGKIRVTILARSTEYRKILNQNELVNALKTVSTFEVQIVDYKYRELGFLDQLRITHNTDIFIGMHGAGLTHLLFLPDWAAVFELYNCEDERCYLDLARLRGVHYITWRRQNKVFPQDKGHHPTLGEHPKFTNYSFDVEEFMYLVLQAADHVLQHPKWPFKKKHDEL</sequence>
<protein>
    <recommendedName>
        <fullName>EGF domain-specific O-linked N-acetylglucosamine transferase</fullName>
        <ecNumber evidence="2">2.4.1.255</ecNumber>
    </recommendedName>
    <alternativeName>
        <fullName>Extracellular O-linked N-acetylglucosamine transferase</fullName>
    </alternativeName>
</protein>
<gene>
    <name type="primary">EOGT</name>
    <name type="synonym">AER61</name>
</gene>
<reference key="1">
    <citation type="submission" date="2004-12" db="EMBL/GenBank/DDBJ databases">
        <title>Phylogeny of xylosyltransferases.</title>
        <authorList>
            <person name="Kiefer-Meyer M.C."/>
            <person name="Pagny S."/>
            <person name="Durambure G."/>
            <person name="Faye L."/>
            <person name="Gomord V."/>
            <person name="Mollicone R."/>
            <person name="Oriol R."/>
        </authorList>
    </citation>
    <scope>NUCLEOTIDE SEQUENCE [MRNA]</scope>
</reference>
<keyword id="KW-0256">Endoplasmic reticulum</keyword>
<keyword id="KW-0325">Glycoprotein</keyword>
<keyword id="KW-0328">Glycosyltransferase</keyword>
<keyword id="KW-1185">Reference proteome</keyword>
<keyword id="KW-0732">Signal</keyword>
<keyword id="KW-0808">Transferase</keyword>